<comment type="function">
    <text evidence="1">Involved in rRNA processing.</text>
</comment>
<comment type="subcellular location">
    <subcellularLocation>
        <location evidence="1">Nucleus</location>
        <location evidence="1">Nucleolus</location>
    </subcellularLocation>
</comment>
<comment type="similarity">
    <text evidence="4">Belongs to the EFG1 family.</text>
</comment>
<protein>
    <recommendedName>
        <fullName>rRNA-processing protein efg1</fullName>
    </recommendedName>
</protein>
<gene>
    <name type="primary">efg1</name>
    <name type="ORF">AFUA_2G02870</name>
</gene>
<keyword id="KW-0175">Coiled coil</keyword>
<keyword id="KW-0539">Nucleus</keyword>
<keyword id="KW-1185">Reference proteome</keyword>
<keyword id="KW-0698">rRNA processing</keyword>
<evidence type="ECO:0000250" key="1"/>
<evidence type="ECO:0000255" key="2"/>
<evidence type="ECO:0000256" key="3">
    <source>
        <dbReference type="SAM" id="MobiDB-lite"/>
    </source>
</evidence>
<evidence type="ECO:0000305" key="4"/>
<accession>Q4WI71</accession>
<name>EFG1P_ASPFU</name>
<dbReference type="EMBL" id="AAHF01000008">
    <property type="protein sequence ID" value="EAL87384.1"/>
    <property type="molecule type" value="Genomic_DNA"/>
</dbReference>
<dbReference type="RefSeq" id="XP_749422.1">
    <property type="nucleotide sequence ID" value="XM_744329.1"/>
</dbReference>
<dbReference type="SMR" id="Q4WI71"/>
<dbReference type="FunCoup" id="Q4WI71">
    <property type="interactions" value="155"/>
</dbReference>
<dbReference type="STRING" id="330879.Q4WI71"/>
<dbReference type="EnsemblFungi" id="EAL87384">
    <property type="protein sequence ID" value="EAL87384"/>
    <property type="gene ID" value="AFUA_2G02870"/>
</dbReference>
<dbReference type="GeneID" id="3506999"/>
<dbReference type="KEGG" id="afm:AFUA_2G02870"/>
<dbReference type="VEuPathDB" id="FungiDB:Afu2g02870"/>
<dbReference type="eggNOG" id="KOG4484">
    <property type="taxonomic scope" value="Eukaryota"/>
</dbReference>
<dbReference type="HOGENOM" id="CLU_066912_0_0_1"/>
<dbReference type="InParanoid" id="Q4WI71"/>
<dbReference type="OMA" id="KCMEEGT"/>
<dbReference type="OrthoDB" id="47732at2759"/>
<dbReference type="Proteomes" id="UP000002530">
    <property type="component" value="Chromosome 2"/>
</dbReference>
<dbReference type="GO" id="GO:0005730">
    <property type="term" value="C:nucleolus"/>
    <property type="evidence" value="ECO:0007669"/>
    <property type="project" value="UniProtKB-SubCell"/>
</dbReference>
<dbReference type="GO" id="GO:0000462">
    <property type="term" value="P:maturation of SSU-rRNA from tricistronic rRNA transcript (SSU-rRNA, 5.8S rRNA, LSU-rRNA)"/>
    <property type="evidence" value="ECO:0000318"/>
    <property type="project" value="GO_Central"/>
</dbReference>
<dbReference type="InterPro" id="IPR019310">
    <property type="entry name" value="Efg1"/>
</dbReference>
<dbReference type="InterPro" id="IPR050786">
    <property type="entry name" value="EFG1_rRNA-proc"/>
</dbReference>
<dbReference type="PANTHER" id="PTHR33911">
    <property type="entry name" value="RRNA-PROCESSING PROTEIN EFG1"/>
    <property type="match status" value="1"/>
</dbReference>
<dbReference type="PANTHER" id="PTHR33911:SF1">
    <property type="entry name" value="RRNA-PROCESSING PROTEIN EFG1"/>
    <property type="match status" value="1"/>
</dbReference>
<dbReference type="Pfam" id="PF10153">
    <property type="entry name" value="Efg1"/>
    <property type="match status" value="1"/>
</dbReference>
<feature type="chain" id="PRO_0000330260" description="rRNA-processing protein efg1">
    <location>
        <begin position="1"/>
        <end position="319"/>
    </location>
</feature>
<feature type="region of interest" description="Disordered" evidence="3">
    <location>
        <begin position="1"/>
        <end position="52"/>
    </location>
</feature>
<feature type="region of interest" description="Disordered" evidence="3">
    <location>
        <begin position="181"/>
        <end position="204"/>
    </location>
</feature>
<feature type="region of interest" description="Disordered" evidence="3">
    <location>
        <begin position="230"/>
        <end position="319"/>
    </location>
</feature>
<feature type="coiled-coil region" evidence="2">
    <location>
        <begin position="49"/>
        <end position="131"/>
    </location>
</feature>
<feature type="compositionally biased region" description="Basic and acidic residues" evidence="3">
    <location>
        <begin position="1"/>
        <end position="13"/>
    </location>
</feature>
<feature type="compositionally biased region" description="Basic and acidic residues" evidence="3">
    <location>
        <begin position="230"/>
        <end position="275"/>
    </location>
</feature>
<feature type="compositionally biased region" description="Basic residues" evidence="3">
    <location>
        <begin position="276"/>
        <end position="291"/>
    </location>
</feature>
<organism>
    <name type="scientific">Aspergillus fumigatus (strain ATCC MYA-4609 / CBS 101355 / FGSC A1100 / Af293)</name>
    <name type="common">Neosartorya fumigata</name>
    <dbReference type="NCBI Taxonomy" id="330879"/>
    <lineage>
        <taxon>Eukaryota</taxon>
        <taxon>Fungi</taxon>
        <taxon>Dikarya</taxon>
        <taxon>Ascomycota</taxon>
        <taxon>Pezizomycotina</taxon>
        <taxon>Eurotiomycetes</taxon>
        <taxon>Eurotiomycetidae</taxon>
        <taxon>Eurotiales</taxon>
        <taxon>Aspergillaceae</taxon>
        <taxon>Aspergillus</taxon>
        <taxon>Aspergillus subgen. Fumigati</taxon>
    </lineage>
</organism>
<sequence>MPREFSREKRAHSDSTTTSKRKYHEGSEDSQPAKKKKVHPPKHEHNYPSVNELKKRIRDVKRLLNRVDLPADARIVQERALAGYEKDLEDELARRHRSQMIKKYHFVRFLDRKAASKDLKRLLRREQEISNSDLDPAAKKEKLAALAGKIHAAQVNHNYTIYYPLTQKYVALYAEQKKKKKESSAQSEKPSEPEAEVASKLIYDTTGERPPMWRVVEKCMEDGTLDLLREGKLDGSEKGEKSSQAPEQKKSKKSTDDDQYARNKSSTEKVSDKPSGKSRKSGGKQDRKPKRSAAMEGAYWSANEHDDDDIESDGGFFEA</sequence>
<proteinExistence type="inferred from homology"/>
<reference key="1">
    <citation type="journal article" date="2005" name="Nature">
        <title>Genomic sequence of the pathogenic and allergenic filamentous fungus Aspergillus fumigatus.</title>
        <authorList>
            <person name="Nierman W.C."/>
            <person name="Pain A."/>
            <person name="Anderson M.J."/>
            <person name="Wortman J.R."/>
            <person name="Kim H.S."/>
            <person name="Arroyo J."/>
            <person name="Berriman M."/>
            <person name="Abe K."/>
            <person name="Archer D.B."/>
            <person name="Bermejo C."/>
            <person name="Bennett J.W."/>
            <person name="Bowyer P."/>
            <person name="Chen D."/>
            <person name="Collins M."/>
            <person name="Coulsen R."/>
            <person name="Davies R."/>
            <person name="Dyer P.S."/>
            <person name="Farman M.L."/>
            <person name="Fedorova N."/>
            <person name="Fedorova N.D."/>
            <person name="Feldblyum T.V."/>
            <person name="Fischer R."/>
            <person name="Fosker N."/>
            <person name="Fraser A."/>
            <person name="Garcia J.L."/>
            <person name="Garcia M.J."/>
            <person name="Goble A."/>
            <person name="Goldman G.H."/>
            <person name="Gomi K."/>
            <person name="Griffith-Jones S."/>
            <person name="Gwilliam R."/>
            <person name="Haas B.J."/>
            <person name="Haas H."/>
            <person name="Harris D.E."/>
            <person name="Horiuchi H."/>
            <person name="Huang J."/>
            <person name="Humphray S."/>
            <person name="Jimenez J."/>
            <person name="Keller N."/>
            <person name="Khouri H."/>
            <person name="Kitamoto K."/>
            <person name="Kobayashi T."/>
            <person name="Konzack S."/>
            <person name="Kulkarni R."/>
            <person name="Kumagai T."/>
            <person name="Lafton A."/>
            <person name="Latge J.-P."/>
            <person name="Li W."/>
            <person name="Lord A."/>
            <person name="Lu C."/>
            <person name="Majoros W.H."/>
            <person name="May G.S."/>
            <person name="Miller B.L."/>
            <person name="Mohamoud Y."/>
            <person name="Molina M."/>
            <person name="Monod M."/>
            <person name="Mouyna I."/>
            <person name="Mulligan S."/>
            <person name="Murphy L.D."/>
            <person name="O'Neil S."/>
            <person name="Paulsen I."/>
            <person name="Penalva M.A."/>
            <person name="Pertea M."/>
            <person name="Price C."/>
            <person name="Pritchard B.L."/>
            <person name="Quail M.A."/>
            <person name="Rabbinowitsch E."/>
            <person name="Rawlins N."/>
            <person name="Rajandream M.A."/>
            <person name="Reichard U."/>
            <person name="Renauld H."/>
            <person name="Robson G.D."/>
            <person name="Rodriguez de Cordoba S."/>
            <person name="Rodriguez-Pena J.M."/>
            <person name="Ronning C.M."/>
            <person name="Rutter S."/>
            <person name="Salzberg S.L."/>
            <person name="Sanchez M."/>
            <person name="Sanchez-Ferrero J.C."/>
            <person name="Saunders D."/>
            <person name="Seeger K."/>
            <person name="Squares R."/>
            <person name="Squares S."/>
            <person name="Takeuchi M."/>
            <person name="Tekaia F."/>
            <person name="Turner G."/>
            <person name="Vazquez de Aldana C.R."/>
            <person name="Weidman J."/>
            <person name="White O."/>
            <person name="Woodward J.R."/>
            <person name="Yu J.-H."/>
            <person name="Fraser C.M."/>
            <person name="Galagan J.E."/>
            <person name="Asai K."/>
            <person name="Machida M."/>
            <person name="Hall N."/>
            <person name="Barrell B.G."/>
            <person name="Denning D.W."/>
        </authorList>
    </citation>
    <scope>NUCLEOTIDE SEQUENCE [LARGE SCALE GENOMIC DNA]</scope>
    <source>
        <strain>ATCC MYA-4609 / CBS 101355 / FGSC A1100 / Af293</strain>
    </source>
</reference>